<proteinExistence type="inferred from homology"/>
<name>TRMD_XYLF2</name>
<gene>
    <name evidence="1" type="primary">trmD</name>
    <name type="ordered locus">XfasM23_0075</name>
</gene>
<dbReference type="EC" id="2.1.1.228" evidence="1"/>
<dbReference type="EMBL" id="CP001011">
    <property type="protein sequence ID" value="ACB91532.1"/>
    <property type="molecule type" value="Genomic_DNA"/>
</dbReference>
<dbReference type="RefSeq" id="WP_004087639.1">
    <property type="nucleotide sequence ID" value="NC_010577.1"/>
</dbReference>
<dbReference type="SMR" id="B2I6A8"/>
<dbReference type="GeneID" id="93903774"/>
<dbReference type="KEGG" id="xfn:XfasM23_0075"/>
<dbReference type="HOGENOM" id="CLU_047363_0_1_6"/>
<dbReference type="Proteomes" id="UP000001698">
    <property type="component" value="Chromosome"/>
</dbReference>
<dbReference type="GO" id="GO:0005829">
    <property type="term" value="C:cytosol"/>
    <property type="evidence" value="ECO:0007669"/>
    <property type="project" value="TreeGrafter"/>
</dbReference>
<dbReference type="GO" id="GO:0052906">
    <property type="term" value="F:tRNA (guanine(37)-N1)-methyltransferase activity"/>
    <property type="evidence" value="ECO:0007669"/>
    <property type="project" value="UniProtKB-UniRule"/>
</dbReference>
<dbReference type="GO" id="GO:0002939">
    <property type="term" value="P:tRNA N1-guanine methylation"/>
    <property type="evidence" value="ECO:0007669"/>
    <property type="project" value="TreeGrafter"/>
</dbReference>
<dbReference type="CDD" id="cd18080">
    <property type="entry name" value="TrmD-like"/>
    <property type="match status" value="1"/>
</dbReference>
<dbReference type="FunFam" id="1.10.1270.20:FF:000001">
    <property type="entry name" value="tRNA (guanine-N(1)-)-methyltransferase"/>
    <property type="match status" value="1"/>
</dbReference>
<dbReference type="FunFam" id="3.40.1280.10:FF:000001">
    <property type="entry name" value="tRNA (guanine-N(1)-)-methyltransferase"/>
    <property type="match status" value="1"/>
</dbReference>
<dbReference type="Gene3D" id="3.40.1280.10">
    <property type="match status" value="1"/>
</dbReference>
<dbReference type="Gene3D" id="1.10.1270.20">
    <property type="entry name" value="tRNA(m1g37)methyltransferase, domain 2"/>
    <property type="match status" value="1"/>
</dbReference>
<dbReference type="HAMAP" id="MF_00605">
    <property type="entry name" value="TrmD"/>
    <property type="match status" value="1"/>
</dbReference>
<dbReference type="InterPro" id="IPR029028">
    <property type="entry name" value="Alpha/beta_knot_MTases"/>
</dbReference>
<dbReference type="InterPro" id="IPR023148">
    <property type="entry name" value="tRNA_m1G_MeTrfase_C_sf"/>
</dbReference>
<dbReference type="InterPro" id="IPR002649">
    <property type="entry name" value="tRNA_m1G_MeTrfase_TrmD"/>
</dbReference>
<dbReference type="InterPro" id="IPR029026">
    <property type="entry name" value="tRNA_m1G_MTases_N"/>
</dbReference>
<dbReference type="InterPro" id="IPR016009">
    <property type="entry name" value="tRNA_MeTrfase_TRMD/TRM10"/>
</dbReference>
<dbReference type="NCBIfam" id="NF000648">
    <property type="entry name" value="PRK00026.1"/>
    <property type="match status" value="1"/>
</dbReference>
<dbReference type="NCBIfam" id="TIGR00088">
    <property type="entry name" value="trmD"/>
    <property type="match status" value="1"/>
</dbReference>
<dbReference type="PANTHER" id="PTHR46417">
    <property type="entry name" value="TRNA (GUANINE-N(1)-)-METHYLTRANSFERASE"/>
    <property type="match status" value="1"/>
</dbReference>
<dbReference type="PANTHER" id="PTHR46417:SF1">
    <property type="entry name" value="TRNA (GUANINE-N(1)-)-METHYLTRANSFERASE"/>
    <property type="match status" value="1"/>
</dbReference>
<dbReference type="Pfam" id="PF01746">
    <property type="entry name" value="tRNA_m1G_MT"/>
    <property type="match status" value="1"/>
</dbReference>
<dbReference type="PIRSF" id="PIRSF000386">
    <property type="entry name" value="tRNA_mtase"/>
    <property type="match status" value="1"/>
</dbReference>
<dbReference type="SUPFAM" id="SSF75217">
    <property type="entry name" value="alpha/beta knot"/>
    <property type="match status" value="1"/>
</dbReference>
<evidence type="ECO:0000255" key="1">
    <source>
        <dbReference type="HAMAP-Rule" id="MF_00605"/>
    </source>
</evidence>
<feature type="chain" id="PRO_1000130226" description="tRNA (guanine-N(1)-)-methyltransferase">
    <location>
        <begin position="1"/>
        <end position="261"/>
    </location>
</feature>
<feature type="binding site" evidence="1">
    <location>
        <position position="113"/>
    </location>
    <ligand>
        <name>S-adenosyl-L-methionine</name>
        <dbReference type="ChEBI" id="CHEBI:59789"/>
    </ligand>
</feature>
<feature type="binding site" evidence="1">
    <location>
        <begin position="133"/>
        <end position="138"/>
    </location>
    <ligand>
        <name>S-adenosyl-L-methionine</name>
        <dbReference type="ChEBI" id="CHEBI:59789"/>
    </ligand>
</feature>
<protein>
    <recommendedName>
        <fullName evidence="1">tRNA (guanine-N(1)-)-methyltransferase</fullName>
        <ecNumber evidence="1">2.1.1.228</ecNumber>
    </recommendedName>
    <alternativeName>
        <fullName evidence="1">M1G-methyltransferase</fullName>
    </alternativeName>
    <alternativeName>
        <fullName evidence="1">tRNA [GM37] methyltransferase</fullName>
    </alternativeName>
</protein>
<sequence>MRIDVISLFPEFIKQSVGFGVIGRAQERGLLDLHNWNPRDYAQGNYRRVDDRPFGGGPGMVMLIEPLRACLEAVRAADPQPAPLIYLSPQGVLLNQSRARKLAMLPRMILLCGRYEGIDERFIAHEVNMELSIGDYVLSGGELGAAVVVDAVTRLQEGVLNDAESAKQDSFEAADSLFDYPHYTHPSNHAFGNVPEVLRSGNHVAITRWRRQQSLLRTWLRRPDLIDEARLSKADRLLLDEIKRTHPMDTDRKASASWRGA</sequence>
<reference key="1">
    <citation type="journal article" date="2010" name="J. Bacteriol.">
        <title>Whole genome sequences of two Xylella fastidiosa strains (M12 and M23) causing almond leaf scorch disease in California.</title>
        <authorList>
            <person name="Chen J."/>
            <person name="Xie G."/>
            <person name="Han S."/>
            <person name="Chertkov O."/>
            <person name="Sims D."/>
            <person name="Civerolo E.L."/>
        </authorList>
    </citation>
    <scope>NUCLEOTIDE SEQUENCE [LARGE SCALE GENOMIC DNA]</scope>
    <source>
        <strain>M23</strain>
    </source>
</reference>
<organism>
    <name type="scientific">Xylella fastidiosa (strain M23)</name>
    <dbReference type="NCBI Taxonomy" id="405441"/>
    <lineage>
        <taxon>Bacteria</taxon>
        <taxon>Pseudomonadati</taxon>
        <taxon>Pseudomonadota</taxon>
        <taxon>Gammaproteobacteria</taxon>
        <taxon>Lysobacterales</taxon>
        <taxon>Lysobacteraceae</taxon>
        <taxon>Xylella</taxon>
    </lineage>
</organism>
<comment type="function">
    <text evidence="1">Specifically methylates guanosine-37 in various tRNAs.</text>
</comment>
<comment type="catalytic activity">
    <reaction evidence="1">
        <text>guanosine(37) in tRNA + S-adenosyl-L-methionine = N(1)-methylguanosine(37) in tRNA + S-adenosyl-L-homocysteine + H(+)</text>
        <dbReference type="Rhea" id="RHEA:36899"/>
        <dbReference type="Rhea" id="RHEA-COMP:10145"/>
        <dbReference type="Rhea" id="RHEA-COMP:10147"/>
        <dbReference type="ChEBI" id="CHEBI:15378"/>
        <dbReference type="ChEBI" id="CHEBI:57856"/>
        <dbReference type="ChEBI" id="CHEBI:59789"/>
        <dbReference type="ChEBI" id="CHEBI:73542"/>
        <dbReference type="ChEBI" id="CHEBI:74269"/>
        <dbReference type="EC" id="2.1.1.228"/>
    </reaction>
</comment>
<comment type="subunit">
    <text evidence="1">Homodimer.</text>
</comment>
<comment type="subcellular location">
    <subcellularLocation>
        <location evidence="1">Cytoplasm</location>
    </subcellularLocation>
</comment>
<comment type="similarity">
    <text evidence="1">Belongs to the RNA methyltransferase TrmD family.</text>
</comment>
<accession>B2I6A8</accession>
<keyword id="KW-0963">Cytoplasm</keyword>
<keyword id="KW-0489">Methyltransferase</keyword>
<keyword id="KW-0949">S-adenosyl-L-methionine</keyword>
<keyword id="KW-0808">Transferase</keyword>
<keyword id="KW-0819">tRNA processing</keyword>